<reference key="1">
    <citation type="journal article" date="2001" name="Nature">
        <title>Genome sequence of enterohaemorrhagic Escherichia coli O157:H7.</title>
        <authorList>
            <person name="Perna N.T."/>
            <person name="Plunkett G. III"/>
            <person name="Burland V."/>
            <person name="Mau B."/>
            <person name="Glasner J.D."/>
            <person name="Rose D.J."/>
            <person name="Mayhew G.F."/>
            <person name="Evans P.S."/>
            <person name="Gregor J."/>
            <person name="Kirkpatrick H.A."/>
            <person name="Posfai G."/>
            <person name="Hackett J."/>
            <person name="Klink S."/>
            <person name="Boutin A."/>
            <person name="Shao Y."/>
            <person name="Miller L."/>
            <person name="Grotbeck E.J."/>
            <person name="Davis N.W."/>
            <person name="Lim A."/>
            <person name="Dimalanta E.T."/>
            <person name="Potamousis K."/>
            <person name="Apodaca J."/>
            <person name="Anantharaman T.S."/>
            <person name="Lin J."/>
            <person name="Yen G."/>
            <person name="Schwartz D.C."/>
            <person name="Welch R.A."/>
            <person name="Blattner F.R."/>
        </authorList>
    </citation>
    <scope>NUCLEOTIDE SEQUENCE [LARGE SCALE GENOMIC DNA]</scope>
    <source>
        <strain>O157:H7 / EDL933 / ATCC 700927 / EHEC</strain>
    </source>
</reference>
<reference key="2">
    <citation type="journal article" date="2001" name="DNA Res.">
        <title>Complete genome sequence of enterohemorrhagic Escherichia coli O157:H7 and genomic comparison with a laboratory strain K-12.</title>
        <authorList>
            <person name="Hayashi T."/>
            <person name="Makino K."/>
            <person name="Ohnishi M."/>
            <person name="Kurokawa K."/>
            <person name="Ishii K."/>
            <person name="Yokoyama K."/>
            <person name="Han C.-G."/>
            <person name="Ohtsubo E."/>
            <person name="Nakayama K."/>
            <person name="Murata T."/>
            <person name="Tanaka M."/>
            <person name="Tobe T."/>
            <person name="Iida T."/>
            <person name="Takami H."/>
            <person name="Honda T."/>
            <person name="Sasakawa C."/>
            <person name="Ogasawara N."/>
            <person name="Yasunaga T."/>
            <person name="Kuhara S."/>
            <person name="Shiba T."/>
            <person name="Hattori M."/>
            <person name="Shinagawa H."/>
        </authorList>
    </citation>
    <scope>NUCLEOTIDE SEQUENCE [LARGE SCALE GENOMIC DNA]</scope>
    <source>
        <strain>O157:H7 / Sakai / RIMD 0509952 / EHEC</strain>
    </source>
</reference>
<accession>P0A7U9</accession>
<accession>P02378</accession>
<proteinExistence type="inferred from homology"/>
<feature type="initiator methionine" description="Removed" evidence="1">
    <location>
        <position position="1"/>
    </location>
</feature>
<feature type="chain" id="PRO_0000167960" description="Small ribosomal subunit protein bS20">
    <location>
        <begin position="2"/>
        <end position="87"/>
    </location>
</feature>
<feature type="region of interest" description="Disordered" evidence="3">
    <location>
        <begin position="1"/>
        <end position="26"/>
    </location>
</feature>
<dbReference type="EMBL" id="AE005174">
    <property type="protein sequence ID" value="AAG54325.1"/>
    <property type="molecule type" value="Genomic_DNA"/>
</dbReference>
<dbReference type="EMBL" id="BA000007">
    <property type="protein sequence ID" value="BAB33449.1"/>
    <property type="molecule type" value="Genomic_DNA"/>
</dbReference>
<dbReference type="PIR" id="A85483">
    <property type="entry name" value="A85483"/>
</dbReference>
<dbReference type="PIR" id="B90632">
    <property type="entry name" value="B90632"/>
</dbReference>
<dbReference type="RefSeq" id="NP_308053.1">
    <property type="nucleotide sequence ID" value="NC_002695.1"/>
</dbReference>
<dbReference type="RefSeq" id="WP_001274021.1">
    <property type="nucleotide sequence ID" value="NZ_VOAI01000002.1"/>
</dbReference>
<dbReference type="SMR" id="P0A7U9"/>
<dbReference type="STRING" id="155864.Z0027"/>
<dbReference type="GeneID" id="913420"/>
<dbReference type="GeneID" id="93777413"/>
<dbReference type="KEGG" id="ece:Z0027"/>
<dbReference type="KEGG" id="ecs:ECs_0026"/>
<dbReference type="PATRIC" id="fig|386585.9.peg.121"/>
<dbReference type="eggNOG" id="COG0268">
    <property type="taxonomic scope" value="Bacteria"/>
</dbReference>
<dbReference type="HOGENOM" id="CLU_160655_4_0_6"/>
<dbReference type="OMA" id="GVIHKNA"/>
<dbReference type="Proteomes" id="UP000000558">
    <property type="component" value="Chromosome"/>
</dbReference>
<dbReference type="Proteomes" id="UP000002519">
    <property type="component" value="Chromosome"/>
</dbReference>
<dbReference type="GO" id="GO:0005829">
    <property type="term" value="C:cytosol"/>
    <property type="evidence" value="ECO:0007669"/>
    <property type="project" value="TreeGrafter"/>
</dbReference>
<dbReference type="GO" id="GO:0015935">
    <property type="term" value="C:small ribosomal subunit"/>
    <property type="evidence" value="ECO:0007669"/>
    <property type="project" value="TreeGrafter"/>
</dbReference>
<dbReference type="GO" id="GO:0070181">
    <property type="term" value="F:small ribosomal subunit rRNA binding"/>
    <property type="evidence" value="ECO:0007669"/>
    <property type="project" value="TreeGrafter"/>
</dbReference>
<dbReference type="GO" id="GO:0003735">
    <property type="term" value="F:structural constituent of ribosome"/>
    <property type="evidence" value="ECO:0007669"/>
    <property type="project" value="InterPro"/>
</dbReference>
<dbReference type="GO" id="GO:0006412">
    <property type="term" value="P:translation"/>
    <property type="evidence" value="ECO:0007669"/>
    <property type="project" value="UniProtKB-UniRule"/>
</dbReference>
<dbReference type="FunFam" id="1.20.58.110:FF:000001">
    <property type="entry name" value="30S ribosomal protein S20"/>
    <property type="match status" value="1"/>
</dbReference>
<dbReference type="Gene3D" id="1.20.58.110">
    <property type="entry name" value="Ribosomal protein S20"/>
    <property type="match status" value="1"/>
</dbReference>
<dbReference type="HAMAP" id="MF_00500">
    <property type="entry name" value="Ribosomal_bS20"/>
    <property type="match status" value="1"/>
</dbReference>
<dbReference type="InterPro" id="IPR002583">
    <property type="entry name" value="Ribosomal_bS20"/>
</dbReference>
<dbReference type="InterPro" id="IPR036510">
    <property type="entry name" value="Ribosomal_bS20_sf"/>
</dbReference>
<dbReference type="NCBIfam" id="TIGR00029">
    <property type="entry name" value="S20"/>
    <property type="match status" value="1"/>
</dbReference>
<dbReference type="PANTHER" id="PTHR33398">
    <property type="entry name" value="30S RIBOSOMAL PROTEIN S20"/>
    <property type="match status" value="1"/>
</dbReference>
<dbReference type="PANTHER" id="PTHR33398:SF1">
    <property type="entry name" value="SMALL RIBOSOMAL SUBUNIT PROTEIN BS20C"/>
    <property type="match status" value="1"/>
</dbReference>
<dbReference type="Pfam" id="PF01649">
    <property type="entry name" value="Ribosomal_S20p"/>
    <property type="match status" value="1"/>
</dbReference>
<dbReference type="SUPFAM" id="SSF46992">
    <property type="entry name" value="Ribosomal protein S20"/>
    <property type="match status" value="1"/>
</dbReference>
<organism>
    <name type="scientific">Escherichia coli O157:H7</name>
    <dbReference type="NCBI Taxonomy" id="83334"/>
    <lineage>
        <taxon>Bacteria</taxon>
        <taxon>Pseudomonadati</taxon>
        <taxon>Pseudomonadota</taxon>
        <taxon>Gammaproteobacteria</taxon>
        <taxon>Enterobacterales</taxon>
        <taxon>Enterobacteriaceae</taxon>
        <taxon>Escherichia</taxon>
    </lineage>
</organism>
<keyword id="KW-1185">Reference proteome</keyword>
<keyword id="KW-0687">Ribonucleoprotein</keyword>
<keyword id="KW-0689">Ribosomal protein</keyword>
<keyword id="KW-0694">RNA-binding</keyword>
<keyword id="KW-0699">rRNA-binding</keyword>
<comment type="function">
    <text evidence="2">Binds directly to 16S ribosomal RNA.</text>
</comment>
<comment type="similarity">
    <text evidence="2">Belongs to the bacterial ribosomal protein bS20 family.</text>
</comment>
<protein>
    <recommendedName>
        <fullName evidence="2">Small ribosomal subunit protein bS20</fullName>
    </recommendedName>
    <alternativeName>
        <fullName evidence="4">30S ribosomal protein S20</fullName>
    </alternativeName>
</protein>
<gene>
    <name evidence="2" type="primary">rpsT</name>
    <name type="ordered locus">Z0027</name>
    <name type="ordered locus">ECs0026</name>
</gene>
<name>RS20_ECO57</name>
<sequence length="87" mass="9684">MANIKSAKKRAIQSEKARKHNASRRSMMRTFIKKVYAAIEAGDKAAAQKAFNEMQPIVDRQAAKGLIHKNKAARHKANLTAQINKLA</sequence>
<evidence type="ECO:0000250" key="1"/>
<evidence type="ECO:0000255" key="2">
    <source>
        <dbReference type="HAMAP-Rule" id="MF_00500"/>
    </source>
</evidence>
<evidence type="ECO:0000256" key="3">
    <source>
        <dbReference type="SAM" id="MobiDB-lite"/>
    </source>
</evidence>
<evidence type="ECO:0000305" key="4"/>